<name>GLO11_ORYSI</name>
<dbReference type="EC" id="4.1.99.5" evidence="1"/>
<dbReference type="EMBL" id="CM000134">
    <property type="protein sequence ID" value="EAZ09166.1"/>
    <property type="molecule type" value="Genomic_DNA"/>
</dbReference>
<dbReference type="SMR" id="A2Z1F5"/>
<dbReference type="STRING" id="39946.A2Z1F5"/>
<dbReference type="EnsemblPlants" id="BGIOSGA030792-TA">
    <property type="protein sequence ID" value="BGIOSGA030792-PA"/>
    <property type="gene ID" value="BGIOSGA030792"/>
</dbReference>
<dbReference type="EnsemblPlants" id="OsGoSa_09g0010940.01">
    <property type="protein sequence ID" value="OsGoSa_09g0010940.01"/>
    <property type="gene ID" value="OsGoSa_09g0010940"/>
</dbReference>
<dbReference type="EnsemblPlants" id="OsIR64_09g0011060.01">
    <property type="protein sequence ID" value="OsIR64_09g0011060.01"/>
    <property type="gene ID" value="OsIR64_09g0011060"/>
</dbReference>
<dbReference type="EnsemblPlants" id="OsKYG_09g0010810.01">
    <property type="protein sequence ID" value="OsKYG_09g0010810.01"/>
    <property type="gene ID" value="OsKYG_09g0010810"/>
</dbReference>
<dbReference type="EnsemblPlants" id="OsLaMu_09g0010790.01">
    <property type="protein sequence ID" value="OsLaMu_09g0010790.01"/>
    <property type="gene ID" value="OsLaMu_09g0010790"/>
</dbReference>
<dbReference type="EnsemblPlants" id="OsLima_09g0011020.01">
    <property type="protein sequence ID" value="OsLima_09g0011020.01"/>
    <property type="gene ID" value="OsLima_09g0011020"/>
</dbReference>
<dbReference type="EnsemblPlants" id="OsLiXu_09g0010740.01">
    <property type="protein sequence ID" value="OsLiXu_09g0010740.01"/>
    <property type="gene ID" value="OsLiXu_09g0010740"/>
</dbReference>
<dbReference type="EnsemblPlants" id="OsMH63_09G011430_01">
    <property type="protein sequence ID" value="OsMH63_09G011430_01"/>
    <property type="gene ID" value="OsMH63_09G011430"/>
</dbReference>
<dbReference type="EnsemblPlants" id="OsPr106_09g0011080.01">
    <property type="protein sequence ID" value="OsPr106_09g0011080.01"/>
    <property type="gene ID" value="OsPr106_09g0011080"/>
</dbReference>
<dbReference type="EnsemblPlants" id="OsZS97_09G011000_01">
    <property type="protein sequence ID" value="OsZS97_09G011000_01"/>
    <property type="gene ID" value="OsZS97_09G011000"/>
</dbReference>
<dbReference type="Gramene" id="BGIOSGA030792-TA">
    <property type="protein sequence ID" value="BGIOSGA030792-PA"/>
    <property type="gene ID" value="BGIOSGA030792"/>
</dbReference>
<dbReference type="Gramene" id="OsGoSa_09g0010940.01">
    <property type="protein sequence ID" value="OsGoSa_09g0010940.01"/>
    <property type="gene ID" value="OsGoSa_09g0010940"/>
</dbReference>
<dbReference type="Gramene" id="OsIR64_09g0011060.01">
    <property type="protein sequence ID" value="OsIR64_09g0011060.01"/>
    <property type="gene ID" value="OsIR64_09g0011060"/>
</dbReference>
<dbReference type="Gramene" id="OsKYG_09g0010810.01">
    <property type="protein sequence ID" value="OsKYG_09g0010810.01"/>
    <property type="gene ID" value="OsKYG_09g0010810"/>
</dbReference>
<dbReference type="Gramene" id="OsLaMu_09g0010790.01">
    <property type="protein sequence ID" value="OsLaMu_09g0010790.01"/>
    <property type="gene ID" value="OsLaMu_09g0010790"/>
</dbReference>
<dbReference type="Gramene" id="OsLima_09g0011020.01">
    <property type="protein sequence ID" value="OsLima_09g0011020.01"/>
    <property type="gene ID" value="OsLima_09g0011020"/>
</dbReference>
<dbReference type="Gramene" id="OsLiXu_09g0010740.01">
    <property type="protein sequence ID" value="OsLiXu_09g0010740.01"/>
    <property type="gene ID" value="OsLiXu_09g0010740"/>
</dbReference>
<dbReference type="Gramene" id="OsMH63_09G011430_01">
    <property type="protein sequence ID" value="OsMH63_09G011430_01"/>
    <property type="gene ID" value="OsMH63_09G011430"/>
</dbReference>
<dbReference type="Gramene" id="OsPr106_09g0011080.01">
    <property type="protein sequence ID" value="OsPr106_09g0011080.01"/>
    <property type="gene ID" value="OsPr106_09g0011080"/>
</dbReference>
<dbReference type="Gramene" id="OsZS97_09G011000_01">
    <property type="protein sequence ID" value="OsZS97_09G011000_01"/>
    <property type="gene ID" value="OsZS97_09G011000"/>
</dbReference>
<dbReference type="HOGENOM" id="CLU_017842_2_0_1"/>
<dbReference type="OMA" id="MWAWAKT"/>
<dbReference type="OrthoDB" id="408954at2759"/>
<dbReference type="Proteomes" id="UP000007015">
    <property type="component" value="Chromosome 9"/>
</dbReference>
<dbReference type="GO" id="GO:0005789">
    <property type="term" value="C:endoplasmic reticulum membrane"/>
    <property type="evidence" value="ECO:0007669"/>
    <property type="project" value="UniProtKB-SubCell"/>
</dbReference>
<dbReference type="GO" id="GO:0071771">
    <property type="term" value="F:aldehyde oxygenase (deformylating) activity"/>
    <property type="evidence" value="ECO:0007669"/>
    <property type="project" value="UniProtKB-EC"/>
</dbReference>
<dbReference type="GO" id="GO:0005506">
    <property type="term" value="F:iron ion binding"/>
    <property type="evidence" value="ECO:0007669"/>
    <property type="project" value="InterPro"/>
</dbReference>
<dbReference type="GO" id="GO:0016491">
    <property type="term" value="F:oxidoreductase activity"/>
    <property type="evidence" value="ECO:0007669"/>
    <property type="project" value="InterPro"/>
</dbReference>
<dbReference type="GO" id="GO:0008610">
    <property type="term" value="P:lipid biosynthetic process"/>
    <property type="evidence" value="ECO:0007669"/>
    <property type="project" value="InterPro"/>
</dbReference>
<dbReference type="GO" id="GO:0009409">
    <property type="term" value="P:response to cold"/>
    <property type="evidence" value="ECO:0007669"/>
    <property type="project" value="EnsemblPlants"/>
</dbReference>
<dbReference type="GO" id="GO:0009651">
    <property type="term" value="P:response to salt stress"/>
    <property type="evidence" value="ECO:0007669"/>
    <property type="project" value="EnsemblPlants"/>
</dbReference>
<dbReference type="GO" id="GO:0009414">
    <property type="term" value="P:response to water deprivation"/>
    <property type="evidence" value="ECO:0007669"/>
    <property type="project" value="EnsemblPlants"/>
</dbReference>
<dbReference type="Gene3D" id="3.40.50.720">
    <property type="entry name" value="NAD(P)-binding Rossmann-like Domain"/>
    <property type="match status" value="1"/>
</dbReference>
<dbReference type="InterPro" id="IPR021940">
    <property type="entry name" value="CER1-like_C"/>
</dbReference>
<dbReference type="InterPro" id="IPR006694">
    <property type="entry name" value="Fatty_acid_hydroxylase"/>
</dbReference>
<dbReference type="InterPro" id="IPR036291">
    <property type="entry name" value="NAD(P)-bd_dom_sf"/>
</dbReference>
<dbReference type="InterPro" id="IPR050307">
    <property type="entry name" value="Sterol_Desaturase_Related"/>
</dbReference>
<dbReference type="PANTHER" id="PTHR11863">
    <property type="entry name" value="STEROL DESATURASE"/>
    <property type="match status" value="1"/>
</dbReference>
<dbReference type="Pfam" id="PF12076">
    <property type="entry name" value="CER1-like_C"/>
    <property type="match status" value="1"/>
</dbReference>
<dbReference type="Pfam" id="PF04116">
    <property type="entry name" value="FA_hydroxylase"/>
    <property type="match status" value="1"/>
</dbReference>
<dbReference type="SUPFAM" id="SSF51735">
    <property type="entry name" value="NAD(P)-binding Rossmann-fold domains"/>
    <property type="match status" value="1"/>
</dbReference>
<reference key="1">
    <citation type="journal article" date="2005" name="PLoS Biol.">
        <title>The genomes of Oryza sativa: a history of duplications.</title>
        <authorList>
            <person name="Yu J."/>
            <person name="Wang J."/>
            <person name="Lin W."/>
            <person name="Li S."/>
            <person name="Li H."/>
            <person name="Zhou J."/>
            <person name="Ni P."/>
            <person name="Dong W."/>
            <person name="Hu S."/>
            <person name="Zeng C."/>
            <person name="Zhang J."/>
            <person name="Zhang Y."/>
            <person name="Li R."/>
            <person name="Xu Z."/>
            <person name="Li S."/>
            <person name="Li X."/>
            <person name="Zheng H."/>
            <person name="Cong L."/>
            <person name="Lin L."/>
            <person name="Yin J."/>
            <person name="Geng J."/>
            <person name="Li G."/>
            <person name="Shi J."/>
            <person name="Liu J."/>
            <person name="Lv H."/>
            <person name="Li J."/>
            <person name="Wang J."/>
            <person name="Deng Y."/>
            <person name="Ran L."/>
            <person name="Shi X."/>
            <person name="Wang X."/>
            <person name="Wu Q."/>
            <person name="Li C."/>
            <person name="Ren X."/>
            <person name="Wang J."/>
            <person name="Wang X."/>
            <person name="Li D."/>
            <person name="Liu D."/>
            <person name="Zhang X."/>
            <person name="Ji Z."/>
            <person name="Zhao W."/>
            <person name="Sun Y."/>
            <person name="Zhang Z."/>
            <person name="Bao J."/>
            <person name="Han Y."/>
            <person name="Dong L."/>
            <person name="Ji J."/>
            <person name="Chen P."/>
            <person name="Wu S."/>
            <person name="Liu J."/>
            <person name="Xiao Y."/>
            <person name="Bu D."/>
            <person name="Tan J."/>
            <person name="Yang L."/>
            <person name="Ye C."/>
            <person name="Zhang J."/>
            <person name="Xu J."/>
            <person name="Zhou Y."/>
            <person name="Yu Y."/>
            <person name="Zhang B."/>
            <person name="Zhuang S."/>
            <person name="Wei H."/>
            <person name="Liu B."/>
            <person name="Lei M."/>
            <person name="Yu H."/>
            <person name="Li Y."/>
            <person name="Xu H."/>
            <person name="Wei S."/>
            <person name="He X."/>
            <person name="Fang L."/>
            <person name="Zhang Z."/>
            <person name="Zhang Y."/>
            <person name="Huang X."/>
            <person name="Su Z."/>
            <person name="Tong W."/>
            <person name="Li J."/>
            <person name="Tong Z."/>
            <person name="Li S."/>
            <person name="Ye J."/>
            <person name="Wang L."/>
            <person name="Fang L."/>
            <person name="Lei T."/>
            <person name="Chen C.-S."/>
            <person name="Chen H.-C."/>
            <person name="Xu Z."/>
            <person name="Li H."/>
            <person name="Huang H."/>
            <person name="Zhang F."/>
            <person name="Xu H."/>
            <person name="Li N."/>
            <person name="Zhao C."/>
            <person name="Li S."/>
            <person name="Dong L."/>
            <person name="Huang Y."/>
            <person name="Li L."/>
            <person name="Xi Y."/>
            <person name="Qi Q."/>
            <person name="Li W."/>
            <person name="Zhang B."/>
            <person name="Hu W."/>
            <person name="Zhang Y."/>
            <person name="Tian X."/>
            <person name="Jiao Y."/>
            <person name="Liang X."/>
            <person name="Jin J."/>
            <person name="Gao L."/>
            <person name="Zheng W."/>
            <person name="Hao B."/>
            <person name="Liu S.-M."/>
            <person name="Wang W."/>
            <person name="Yuan L."/>
            <person name="Cao M."/>
            <person name="McDermott J."/>
            <person name="Samudrala R."/>
            <person name="Wang J."/>
            <person name="Wong G.K.-S."/>
            <person name="Yang H."/>
        </authorList>
    </citation>
    <scope>NUCLEOTIDE SEQUENCE [LARGE SCALE GENOMIC DNA]</scope>
    <source>
        <strain>cv. 93-11</strain>
    </source>
</reference>
<sequence>MGAAFLSSWPWDNLGAYKYVLYAPLVGKAVAGRAWERASPDHWLLLLLVLFGVRALTYQLWSSFSNMLFATRRRRIVRDGVDFGQIDREWDWDNFLILQVHMAAAAFYAFPSLRHLPLWDARGLAVAALLHVAATEPLFYAAHRAFHRGHLFSCYHLQHHSAKVPQPFTAGFATPLEQLVLGALMAVPLAAACAAGHGSVALAFAYVLGFDNLRAMGHCNVEVFPGGLFQSLPVLKYLIYTPTYHTIHHTKEDANFCLFMPLFDLIGGTLDAQSWEMQKKTSAGVDEVPEFVFLAHVVDVMQSLHVPFVLRTFASTPFSVQPFLLPMWPFAFLVMLMMWAWSKTFVISCYRLRGRLHQMWAVPRYGFHYFLPFAKDGINNQIELAILRADKMGAKVVSLAALNKNEALNGGGTLFVNKHPGLRVRVVHGNTLTAAVILNEIPQGTTEVFMTGATSKLGRAIALYLCRKKVRVMMMTLSTERFQKIQREATPEHQQYLVQVTKYRSAQHCKTWIVGKWLSPREQRWAPPGTHFHQFVVPPIIGFRRDCTYGKLAAMRLPKDVQGLGACEYSLERGVVHACHAGGVVHFLEGYTHHEVGAIDVDRIDVVWEAALRHGLRPV</sequence>
<feature type="chain" id="PRO_0000445869" description="Very-long-chain aldehyde decarbonylase GL1-1">
    <location>
        <begin position="1"/>
        <end position="619"/>
    </location>
</feature>
<feature type="transmembrane region" description="Helical" evidence="2">
    <location>
        <begin position="44"/>
        <end position="64"/>
    </location>
</feature>
<feature type="transmembrane region" description="Helical" evidence="2">
    <location>
        <begin position="93"/>
        <end position="113"/>
    </location>
</feature>
<feature type="transmembrane region" description="Helical" evidence="2">
    <location>
        <begin position="123"/>
        <end position="143"/>
    </location>
</feature>
<feature type="transmembrane region" description="Helical" evidence="2">
    <location>
        <begin position="190"/>
        <end position="210"/>
    </location>
</feature>
<feature type="transmembrane region" description="Helical" evidence="2">
    <location>
        <begin position="322"/>
        <end position="342"/>
    </location>
</feature>
<feature type="domain" description="Fatty acid hydroxylase" evidence="2">
    <location>
        <begin position="129"/>
        <end position="269"/>
    </location>
</feature>
<comment type="function">
    <text evidence="1">Aldehyde decarbonylase involved in the conversion of aldehydes to alkanes. Core component of a very-long-chain alkane synthesis complex.</text>
</comment>
<comment type="catalytic activity">
    <reaction evidence="1">
        <text>a long-chain fatty aldehyde + 2 NADPH + O2 + H(+) = a long-chain alkane + formate + 2 NADP(+) + H2O</text>
        <dbReference type="Rhea" id="RHEA:21440"/>
        <dbReference type="ChEBI" id="CHEBI:15377"/>
        <dbReference type="ChEBI" id="CHEBI:15378"/>
        <dbReference type="ChEBI" id="CHEBI:15379"/>
        <dbReference type="ChEBI" id="CHEBI:15740"/>
        <dbReference type="ChEBI" id="CHEBI:17176"/>
        <dbReference type="ChEBI" id="CHEBI:57783"/>
        <dbReference type="ChEBI" id="CHEBI:58349"/>
        <dbReference type="ChEBI" id="CHEBI:83563"/>
        <dbReference type="EC" id="4.1.99.5"/>
    </reaction>
</comment>
<comment type="subunit">
    <text evidence="1">Homodimer.</text>
</comment>
<comment type="subcellular location">
    <subcellularLocation>
        <location evidence="1">Endoplasmic reticulum membrane</location>
        <topology evidence="1">Multi-pass membrane protein</topology>
    </subcellularLocation>
</comment>
<comment type="similarity">
    <text evidence="3">Belongs to the sterol desaturase family.</text>
</comment>
<accession>A2Z1F5</accession>
<evidence type="ECO:0000250" key="1">
    <source>
        <dbReference type="UniProtKB" id="F4HVY0"/>
    </source>
</evidence>
<evidence type="ECO:0000255" key="2"/>
<evidence type="ECO:0000305" key="3"/>
<evidence type="ECO:0000312" key="4">
    <source>
        <dbReference type="EMBL" id="EAZ09166.1"/>
    </source>
</evidence>
<keyword id="KW-0256">Endoplasmic reticulum</keyword>
<keyword id="KW-0456">Lyase</keyword>
<keyword id="KW-0472">Membrane</keyword>
<keyword id="KW-0521">NADP</keyword>
<keyword id="KW-1185">Reference proteome</keyword>
<keyword id="KW-0812">Transmembrane</keyword>
<keyword id="KW-1133">Transmembrane helix</keyword>
<organism>
    <name type="scientific">Oryza sativa subsp. indica</name>
    <name type="common">Rice</name>
    <dbReference type="NCBI Taxonomy" id="39946"/>
    <lineage>
        <taxon>Eukaryota</taxon>
        <taxon>Viridiplantae</taxon>
        <taxon>Streptophyta</taxon>
        <taxon>Embryophyta</taxon>
        <taxon>Tracheophyta</taxon>
        <taxon>Spermatophyta</taxon>
        <taxon>Magnoliopsida</taxon>
        <taxon>Liliopsida</taxon>
        <taxon>Poales</taxon>
        <taxon>Poaceae</taxon>
        <taxon>BOP clade</taxon>
        <taxon>Oryzoideae</taxon>
        <taxon>Oryzeae</taxon>
        <taxon>Oryzinae</taxon>
        <taxon>Oryza</taxon>
        <taxon>Oryza sativa</taxon>
    </lineage>
</organism>
<gene>
    <name evidence="3" type="primary">GL1-1</name>
    <name evidence="4" type="ORF">OsI_31436</name>
</gene>
<protein>
    <recommendedName>
        <fullName evidence="3">Very-long-chain aldehyde decarbonylase GL1-1</fullName>
        <ecNumber evidence="1">4.1.99.5</ecNumber>
    </recommendedName>
    <alternativeName>
        <fullName evidence="3">Protein GLOSSY 1-1</fullName>
    </alternativeName>
</protein>
<proteinExistence type="inferred from homology"/>